<name>PFKA_BACVZ</name>
<keyword id="KW-0021">Allosteric enzyme</keyword>
<keyword id="KW-0067">ATP-binding</keyword>
<keyword id="KW-0963">Cytoplasm</keyword>
<keyword id="KW-0324">Glycolysis</keyword>
<keyword id="KW-0418">Kinase</keyword>
<keyword id="KW-0460">Magnesium</keyword>
<keyword id="KW-0479">Metal-binding</keyword>
<keyword id="KW-0547">Nucleotide-binding</keyword>
<keyword id="KW-0808">Transferase</keyword>
<organism>
    <name type="scientific">Bacillus velezensis (strain DSM 23117 / BGSC 10A6 / LMG 26770 / FZB42)</name>
    <name type="common">Bacillus amyloliquefaciens subsp. plantarum</name>
    <dbReference type="NCBI Taxonomy" id="326423"/>
    <lineage>
        <taxon>Bacteria</taxon>
        <taxon>Bacillati</taxon>
        <taxon>Bacillota</taxon>
        <taxon>Bacilli</taxon>
        <taxon>Bacillales</taxon>
        <taxon>Bacillaceae</taxon>
        <taxon>Bacillus</taxon>
        <taxon>Bacillus amyloliquefaciens group</taxon>
    </lineage>
</organism>
<accession>A7Z7K6</accession>
<gene>
    <name evidence="1" type="primary">pfkA</name>
    <name type="ordered locus">RBAM_026240</name>
</gene>
<feature type="chain" id="PRO_1000059737" description="ATP-dependent 6-phosphofructokinase">
    <location>
        <begin position="1"/>
        <end position="319"/>
    </location>
</feature>
<feature type="active site" description="Proton acceptor" evidence="1">
    <location>
        <position position="127"/>
    </location>
</feature>
<feature type="binding site" evidence="1">
    <location>
        <position position="11"/>
    </location>
    <ligand>
        <name>ATP</name>
        <dbReference type="ChEBI" id="CHEBI:30616"/>
    </ligand>
</feature>
<feature type="binding site" evidence="1">
    <location>
        <begin position="21"/>
        <end position="25"/>
    </location>
    <ligand>
        <name>ADP</name>
        <dbReference type="ChEBI" id="CHEBI:456216"/>
        <note>allosteric activator; ligand shared between dimeric partners</note>
    </ligand>
</feature>
<feature type="binding site" evidence="1">
    <location>
        <begin position="72"/>
        <end position="73"/>
    </location>
    <ligand>
        <name>ATP</name>
        <dbReference type="ChEBI" id="CHEBI:30616"/>
    </ligand>
</feature>
<feature type="binding site" evidence="1">
    <location>
        <begin position="102"/>
        <end position="105"/>
    </location>
    <ligand>
        <name>ATP</name>
        <dbReference type="ChEBI" id="CHEBI:30616"/>
    </ligand>
</feature>
<feature type="binding site" evidence="1">
    <location>
        <position position="103"/>
    </location>
    <ligand>
        <name>Mg(2+)</name>
        <dbReference type="ChEBI" id="CHEBI:18420"/>
        <note>catalytic</note>
    </ligand>
</feature>
<feature type="binding site" description="in other chain" evidence="1">
    <location>
        <begin position="125"/>
        <end position="127"/>
    </location>
    <ligand>
        <name>substrate</name>
        <note>ligand shared between dimeric partners</note>
    </ligand>
</feature>
<feature type="binding site" description="in other chain" evidence="1">
    <location>
        <position position="154"/>
    </location>
    <ligand>
        <name>ADP</name>
        <dbReference type="ChEBI" id="CHEBI:456216"/>
        <note>allosteric activator; ligand shared between dimeric partners</note>
    </ligand>
</feature>
<feature type="binding site" evidence="1">
    <location>
        <position position="162"/>
    </location>
    <ligand>
        <name>substrate</name>
        <note>ligand shared between dimeric partners</note>
    </ligand>
</feature>
<feature type="binding site" description="in other chain" evidence="1">
    <location>
        <begin position="169"/>
        <end position="171"/>
    </location>
    <ligand>
        <name>substrate</name>
        <note>ligand shared between dimeric partners</note>
    </ligand>
</feature>
<feature type="binding site" description="in other chain" evidence="1">
    <location>
        <begin position="185"/>
        <end position="187"/>
    </location>
    <ligand>
        <name>ADP</name>
        <dbReference type="ChEBI" id="CHEBI:456216"/>
        <note>allosteric activator; ligand shared between dimeric partners</note>
    </ligand>
</feature>
<feature type="binding site" description="in other chain" evidence="1">
    <location>
        <position position="211"/>
    </location>
    <ligand>
        <name>ADP</name>
        <dbReference type="ChEBI" id="CHEBI:456216"/>
        <note>allosteric activator; ligand shared between dimeric partners</note>
    </ligand>
</feature>
<feature type="binding site" description="in other chain" evidence="1">
    <location>
        <begin position="213"/>
        <end position="215"/>
    </location>
    <ligand>
        <name>ADP</name>
        <dbReference type="ChEBI" id="CHEBI:456216"/>
        <note>allosteric activator; ligand shared between dimeric partners</note>
    </ligand>
</feature>
<feature type="binding site" description="in other chain" evidence="1">
    <location>
        <position position="222"/>
    </location>
    <ligand>
        <name>substrate</name>
        <note>ligand shared between dimeric partners</note>
    </ligand>
</feature>
<feature type="binding site" evidence="1">
    <location>
        <position position="243"/>
    </location>
    <ligand>
        <name>substrate</name>
        <note>ligand shared between dimeric partners</note>
    </ligand>
</feature>
<feature type="binding site" description="in other chain" evidence="1">
    <location>
        <begin position="249"/>
        <end position="252"/>
    </location>
    <ligand>
        <name>substrate</name>
        <note>ligand shared between dimeric partners</note>
    </ligand>
</feature>
<protein>
    <recommendedName>
        <fullName evidence="1">ATP-dependent 6-phosphofructokinase</fullName>
        <shortName evidence="1">ATP-PFK</shortName>
        <shortName evidence="1">Phosphofructokinase</shortName>
        <ecNumber evidence="1">2.7.1.11</ecNumber>
    </recommendedName>
    <alternativeName>
        <fullName evidence="1">Phosphohexokinase</fullName>
    </alternativeName>
</protein>
<reference key="1">
    <citation type="journal article" date="2007" name="Nat. Biotechnol.">
        <title>Comparative analysis of the complete genome sequence of the plant growth-promoting bacterium Bacillus amyloliquefaciens FZB42.</title>
        <authorList>
            <person name="Chen X.H."/>
            <person name="Koumoutsi A."/>
            <person name="Scholz R."/>
            <person name="Eisenreich A."/>
            <person name="Schneider K."/>
            <person name="Heinemeyer I."/>
            <person name="Morgenstern B."/>
            <person name="Voss B."/>
            <person name="Hess W.R."/>
            <person name="Reva O."/>
            <person name="Junge H."/>
            <person name="Voigt B."/>
            <person name="Jungblut P.R."/>
            <person name="Vater J."/>
            <person name="Suessmuth R."/>
            <person name="Liesegang H."/>
            <person name="Strittmatter A."/>
            <person name="Gottschalk G."/>
            <person name="Borriss R."/>
        </authorList>
    </citation>
    <scope>NUCLEOTIDE SEQUENCE [LARGE SCALE GENOMIC DNA]</scope>
    <source>
        <strain>DSM 23117 / BGSC 10A6 / LMG 26770 / FZB42</strain>
    </source>
</reference>
<comment type="function">
    <text evidence="1">Catalyzes the phosphorylation of D-fructose 6-phosphate to fructose 1,6-bisphosphate by ATP, the first committing step of glycolysis.</text>
</comment>
<comment type="catalytic activity">
    <reaction evidence="1">
        <text>beta-D-fructose 6-phosphate + ATP = beta-D-fructose 1,6-bisphosphate + ADP + H(+)</text>
        <dbReference type="Rhea" id="RHEA:16109"/>
        <dbReference type="ChEBI" id="CHEBI:15378"/>
        <dbReference type="ChEBI" id="CHEBI:30616"/>
        <dbReference type="ChEBI" id="CHEBI:32966"/>
        <dbReference type="ChEBI" id="CHEBI:57634"/>
        <dbReference type="ChEBI" id="CHEBI:456216"/>
        <dbReference type="EC" id="2.7.1.11"/>
    </reaction>
</comment>
<comment type="cofactor">
    <cofactor evidence="1">
        <name>Mg(2+)</name>
        <dbReference type="ChEBI" id="CHEBI:18420"/>
    </cofactor>
</comment>
<comment type="activity regulation">
    <text evidence="1">Allosterically activated by ADP and other diphosphonucleosides, and allosterically inhibited by phosphoenolpyruvate.</text>
</comment>
<comment type="pathway">
    <text evidence="1">Carbohydrate degradation; glycolysis; D-glyceraldehyde 3-phosphate and glycerone phosphate from D-glucose: step 3/4.</text>
</comment>
<comment type="subunit">
    <text evidence="1">Homotetramer.</text>
</comment>
<comment type="subcellular location">
    <subcellularLocation>
        <location evidence="1">Cytoplasm</location>
    </subcellularLocation>
</comment>
<comment type="similarity">
    <text evidence="1">Belongs to the phosphofructokinase type A (PFKA) family. ATP-dependent PFK group I subfamily. Prokaryotic clade 'B1' sub-subfamily.</text>
</comment>
<sequence length="319" mass="34261">MKRIGVLTSGGDSPGMNAAVRAVVRKAIYHDVEVYGIYNGYSGLISGKIEKLELGSVGDIIHRGGTKLYTARCPEFKTVEGREKGIENLKKLGIEGLVVIGGDGSYMGAKKLTEHGFPCVGVPGTIDNDIPGTDFTIGFDTALNTVIDAIDKIRDTATSHERTYVIEVMGRHAGDIALWAGLAGGAESILIPEADYDMQEIIGRLKRGHDRGKKHSIIIVAEGVGSGVEFGKRIEEETNLETRVSVLGHIQRGGSPSASDRVLASRLGAYAVELLLKGKGGRCVGIQNNKLVDHDIIEILESKHTVEPNMYQLSKELSI</sequence>
<evidence type="ECO:0000255" key="1">
    <source>
        <dbReference type="HAMAP-Rule" id="MF_00339"/>
    </source>
</evidence>
<dbReference type="EC" id="2.7.1.11" evidence="1"/>
<dbReference type="EMBL" id="CP000560">
    <property type="protein sequence ID" value="ABS74982.1"/>
    <property type="molecule type" value="Genomic_DNA"/>
</dbReference>
<dbReference type="RefSeq" id="WP_007408068.1">
    <property type="nucleotide sequence ID" value="NC_009725.2"/>
</dbReference>
<dbReference type="SMR" id="A7Z7K6"/>
<dbReference type="GeneID" id="93081766"/>
<dbReference type="KEGG" id="bay:RBAM_026240"/>
<dbReference type="HOGENOM" id="CLU_020655_0_1_9"/>
<dbReference type="UniPathway" id="UPA00109">
    <property type="reaction ID" value="UER00182"/>
</dbReference>
<dbReference type="Proteomes" id="UP000001120">
    <property type="component" value="Chromosome"/>
</dbReference>
<dbReference type="GO" id="GO:0005945">
    <property type="term" value="C:6-phosphofructokinase complex"/>
    <property type="evidence" value="ECO:0007669"/>
    <property type="project" value="TreeGrafter"/>
</dbReference>
<dbReference type="GO" id="GO:0003872">
    <property type="term" value="F:6-phosphofructokinase activity"/>
    <property type="evidence" value="ECO:0007669"/>
    <property type="project" value="UniProtKB-UniRule"/>
</dbReference>
<dbReference type="GO" id="GO:0016208">
    <property type="term" value="F:AMP binding"/>
    <property type="evidence" value="ECO:0007669"/>
    <property type="project" value="TreeGrafter"/>
</dbReference>
<dbReference type="GO" id="GO:0005524">
    <property type="term" value="F:ATP binding"/>
    <property type="evidence" value="ECO:0007669"/>
    <property type="project" value="UniProtKB-KW"/>
</dbReference>
<dbReference type="GO" id="GO:0070095">
    <property type="term" value="F:fructose-6-phosphate binding"/>
    <property type="evidence" value="ECO:0007669"/>
    <property type="project" value="TreeGrafter"/>
</dbReference>
<dbReference type="GO" id="GO:0042802">
    <property type="term" value="F:identical protein binding"/>
    <property type="evidence" value="ECO:0007669"/>
    <property type="project" value="TreeGrafter"/>
</dbReference>
<dbReference type="GO" id="GO:0046872">
    <property type="term" value="F:metal ion binding"/>
    <property type="evidence" value="ECO:0007669"/>
    <property type="project" value="UniProtKB-KW"/>
</dbReference>
<dbReference type="GO" id="GO:0048029">
    <property type="term" value="F:monosaccharide binding"/>
    <property type="evidence" value="ECO:0007669"/>
    <property type="project" value="TreeGrafter"/>
</dbReference>
<dbReference type="GO" id="GO:0061621">
    <property type="term" value="P:canonical glycolysis"/>
    <property type="evidence" value="ECO:0007669"/>
    <property type="project" value="TreeGrafter"/>
</dbReference>
<dbReference type="GO" id="GO:0030388">
    <property type="term" value="P:fructose 1,6-bisphosphate metabolic process"/>
    <property type="evidence" value="ECO:0007669"/>
    <property type="project" value="TreeGrafter"/>
</dbReference>
<dbReference type="GO" id="GO:0006002">
    <property type="term" value="P:fructose 6-phosphate metabolic process"/>
    <property type="evidence" value="ECO:0007669"/>
    <property type="project" value="InterPro"/>
</dbReference>
<dbReference type="CDD" id="cd00763">
    <property type="entry name" value="Bacterial_PFK"/>
    <property type="match status" value="1"/>
</dbReference>
<dbReference type="FunFam" id="3.40.50.450:FF:000001">
    <property type="entry name" value="ATP-dependent 6-phosphofructokinase"/>
    <property type="match status" value="1"/>
</dbReference>
<dbReference type="FunFam" id="3.40.50.460:FF:000002">
    <property type="entry name" value="ATP-dependent 6-phosphofructokinase"/>
    <property type="match status" value="1"/>
</dbReference>
<dbReference type="Gene3D" id="3.40.50.450">
    <property type="match status" value="1"/>
</dbReference>
<dbReference type="Gene3D" id="3.40.50.460">
    <property type="entry name" value="Phosphofructokinase domain"/>
    <property type="match status" value="1"/>
</dbReference>
<dbReference type="HAMAP" id="MF_00339">
    <property type="entry name" value="Phosphofructokinase_I_B1"/>
    <property type="match status" value="1"/>
</dbReference>
<dbReference type="InterPro" id="IPR022953">
    <property type="entry name" value="ATP_PFK"/>
</dbReference>
<dbReference type="InterPro" id="IPR012003">
    <property type="entry name" value="ATP_PFK_prok-type"/>
</dbReference>
<dbReference type="InterPro" id="IPR012828">
    <property type="entry name" value="PFKA_ATP_prok"/>
</dbReference>
<dbReference type="InterPro" id="IPR015912">
    <property type="entry name" value="Phosphofructokinase_CS"/>
</dbReference>
<dbReference type="InterPro" id="IPR000023">
    <property type="entry name" value="Phosphofructokinase_dom"/>
</dbReference>
<dbReference type="InterPro" id="IPR035966">
    <property type="entry name" value="PKF_sf"/>
</dbReference>
<dbReference type="NCBIfam" id="TIGR02482">
    <property type="entry name" value="PFKA_ATP"/>
    <property type="match status" value="1"/>
</dbReference>
<dbReference type="NCBIfam" id="NF002872">
    <property type="entry name" value="PRK03202.1"/>
    <property type="match status" value="1"/>
</dbReference>
<dbReference type="PANTHER" id="PTHR13697:SF4">
    <property type="entry name" value="ATP-DEPENDENT 6-PHOSPHOFRUCTOKINASE"/>
    <property type="match status" value="1"/>
</dbReference>
<dbReference type="PANTHER" id="PTHR13697">
    <property type="entry name" value="PHOSPHOFRUCTOKINASE"/>
    <property type="match status" value="1"/>
</dbReference>
<dbReference type="Pfam" id="PF00365">
    <property type="entry name" value="PFK"/>
    <property type="match status" value="1"/>
</dbReference>
<dbReference type="PIRSF" id="PIRSF000532">
    <property type="entry name" value="ATP_PFK_prok"/>
    <property type="match status" value="1"/>
</dbReference>
<dbReference type="PRINTS" id="PR00476">
    <property type="entry name" value="PHFRCTKINASE"/>
</dbReference>
<dbReference type="SUPFAM" id="SSF53784">
    <property type="entry name" value="Phosphofructokinase"/>
    <property type="match status" value="1"/>
</dbReference>
<dbReference type="PROSITE" id="PS00433">
    <property type="entry name" value="PHOSPHOFRUCTOKINASE"/>
    <property type="match status" value="1"/>
</dbReference>
<proteinExistence type="inferred from homology"/>